<organism>
    <name type="scientific">Brucella suis biovar 1 (strain 1330)</name>
    <dbReference type="NCBI Taxonomy" id="204722"/>
    <lineage>
        <taxon>Bacteria</taxon>
        <taxon>Pseudomonadati</taxon>
        <taxon>Pseudomonadota</taxon>
        <taxon>Alphaproteobacteria</taxon>
        <taxon>Hyphomicrobiales</taxon>
        <taxon>Brucellaceae</taxon>
        <taxon>Brucella/Ochrobactrum group</taxon>
        <taxon>Brucella</taxon>
    </lineage>
</organism>
<protein>
    <recommendedName>
        <fullName evidence="1">tRNA N6-adenosine threonylcarbamoyltransferase</fullName>
        <ecNumber evidence="1">2.3.1.234</ecNumber>
    </recommendedName>
    <alternativeName>
        <fullName evidence="1">N6-L-threonylcarbamoyladenine synthase</fullName>
        <shortName evidence="1">t(6)A synthase</shortName>
    </alternativeName>
    <alternativeName>
        <fullName evidence="1">t(6)A37 threonylcarbamoyladenosine biosynthesis protein TsaD</fullName>
    </alternativeName>
    <alternativeName>
        <fullName evidence="1">tRNA threonylcarbamoyladenosine biosynthesis protein TsaD</fullName>
    </alternativeName>
</protein>
<feature type="chain" id="PRO_0000303297" description="tRNA N6-adenosine threonylcarbamoyltransferase">
    <location>
        <begin position="1"/>
        <end position="359"/>
    </location>
</feature>
<feature type="region of interest" description="Disordered" evidence="2">
    <location>
        <begin position="328"/>
        <end position="359"/>
    </location>
</feature>
<feature type="binding site" evidence="1">
    <location>
        <position position="115"/>
    </location>
    <ligand>
        <name>Fe cation</name>
        <dbReference type="ChEBI" id="CHEBI:24875"/>
    </ligand>
</feature>
<feature type="binding site" evidence="1">
    <location>
        <position position="119"/>
    </location>
    <ligand>
        <name>Fe cation</name>
        <dbReference type="ChEBI" id="CHEBI:24875"/>
    </ligand>
</feature>
<feature type="binding site" evidence="1">
    <location>
        <begin position="137"/>
        <end position="141"/>
    </location>
    <ligand>
        <name>substrate</name>
    </ligand>
</feature>
<feature type="binding site" evidence="1">
    <location>
        <position position="170"/>
    </location>
    <ligand>
        <name>substrate</name>
    </ligand>
</feature>
<feature type="binding site" evidence="1">
    <location>
        <position position="183"/>
    </location>
    <ligand>
        <name>substrate</name>
    </ligand>
</feature>
<feature type="binding site" evidence="1">
    <location>
        <position position="283"/>
    </location>
    <ligand>
        <name>substrate</name>
    </ligand>
</feature>
<feature type="binding site" evidence="1">
    <location>
        <position position="311"/>
    </location>
    <ligand>
        <name>Fe cation</name>
        <dbReference type="ChEBI" id="CHEBI:24875"/>
    </ligand>
</feature>
<comment type="function">
    <text evidence="1">Required for the formation of a threonylcarbamoyl group on adenosine at position 37 (t(6)A37) in tRNAs that read codons beginning with adenine. Is involved in the transfer of the threonylcarbamoyl moiety of threonylcarbamoyl-AMP (TC-AMP) to the N6 group of A37, together with TsaE and TsaB. TsaD likely plays a direct catalytic role in this reaction.</text>
</comment>
<comment type="catalytic activity">
    <reaction evidence="1">
        <text>L-threonylcarbamoyladenylate + adenosine(37) in tRNA = N(6)-L-threonylcarbamoyladenosine(37) in tRNA + AMP + H(+)</text>
        <dbReference type="Rhea" id="RHEA:37059"/>
        <dbReference type="Rhea" id="RHEA-COMP:10162"/>
        <dbReference type="Rhea" id="RHEA-COMP:10163"/>
        <dbReference type="ChEBI" id="CHEBI:15378"/>
        <dbReference type="ChEBI" id="CHEBI:73682"/>
        <dbReference type="ChEBI" id="CHEBI:74411"/>
        <dbReference type="ChEBI" id="CHEBI:74418"/>
        <dbReference type="ChEBI" id="CHEBI:456215"/>
        <dbReference type="EC" id="2.3.1.234"/>
    </reaction>
</comment>
<comment type="cofactor">
    <cofactor evidence="1">
        <name>Fe(2+)</name>
        <dbReference type="ChEBI" id="CHEBI:29033"/>
    </cofactor>
    <text evidence="1">Binds 1 Fe(2+) ion per subunit.</text>
</comment>
<comment type="subcellular location">
    <subcellularLocation>
        <location evidence="1">Cytoplasm</location>
    </subcellularLocation>
</comment>
<comment type="similarity">
    <text evidence="1">Belongs to the KAE1 / TsaD family.</text>
</comment>
<name>TSAD_BRUSU</name>
<sequence length="359" mass="37982">MRVLGIETSCDETAAAIVERDDMGEGRILSNVVLSQIAEHEPYGGVVPEIAARAHVEALDRLVDRALNDAGLKLYEVDAVAATAGPGLIGGLIVGLMTAKALAMAAQKPFYAVNHLEGHALTARLTDGLPFPYLLLLVSGGHTQMVLVRGIGDYERLGTTIDDALGEAFDKTAKLLGLPYPGGPAVERMALQGDQKRFALPRPLKGEARLDFSFSGLKTAVRQTATELVPLTDQDVTDICASFQAAVADTLSDRVGRSLERFKTEFPDCATPSLVVAGGVAANKTLRAALENLCTRHGFAFIAPPLNLCTDNAAMIAWAGAERAATQAPDSLDIAPRSRWPLDEKSAPVFGTGRRGAKA</sequence>
<keyword id="KW-0012">Acyltransferase</keyword>
<keyword id="KW-0963">Cytoplasm</keyword>
<keyword id="KW-0408">Iron</keyword>
<keyword id="KW-0479">Metal-binding</keyword>
<keyword id="KW-0808">Transferase</keyword>
<keyword id="KW-0819">tRNA processing</keyword>
<proteinExistence type="inferred from homology"/>
<dbReference type="EC" id="2.3.1.234" evidence="1"/>
<dbReference type="EMBL" id="AE014291">
    <property type="protein sequence ID" value="AAN30782.1"/>
    <property type="molecule type" value="Genomic_DNA"/>
</dbReference>
<dbReference type="EMBL" id="CP002997">
    <property type="protein sequence ID" value="AEM19199.1"/>
    <property type="molecule type" value="Genomic_DNA"/>
</dbReference>
<dbReference type="PIR" id="AB3274">
    <property type="entry name" value="AB3274"/>
</dbReference>
<dbReference type="RefSeq" id="WP_002964958.1">
    <property type="nucleotide sequence ID" value="NZ_KN046804.1"/>
</dbReference>
<dbReference type="SMR" id="Q8FYI5"/>
<dbReference type="GeneID" id="97534824"/>
<dbReference type="KEGG" id="bms:BR1888"/>
<dbReference type="KEGG" id="bsi:BS1330_I1882"/>
<dbReference type="PATRIC" id="fig|204722.21.peg.2523"/>
<dbReference type="HOGENOM" id="CLU_023208_0_2_5"/>
<dbReference type="PhylomeDB" id="Q8FYI5"/>
<dbReference type="Proteomes" id="UP000007104">
    <property type="component" value="Chromosome I"/>
</dbReference>
<dbReference type="GO" id="GO:0005737">
    <property type="term" value="C:cytoplasm"/>
    <property type="evidence" value="ECO:0007669"/>
    <property type="project" value="UniProtKB-SubCell"/>
</dbReference>
<dbReference type="GO" id="GO:0005506">
    <property type="term" value="F:iron ion binding"/>
    <property type="evidence" value="ECO:0007669"/>
    <property type="project" value="UniProtKB-UniRule"/>
</dbReference>
<dbReference type="GO" id="GO:0061711">
    <property type="term" value="F:N(6)-L-threonylcarbamoyladenine synthase activity"/>
    <property type="evidence" value="ECO:0007669"/>
    <property type="project" value="UniProtKB-EC"/>
</dbReference>
<dbReference type="GO" id="GO:0002949">
    <property type="term" value="P:tRNA threonylcarbamoyladenosine modification"/>
    <property type="evidence" value="ECO:0007669"/>
    <property type="project" value="UniProtKB-UniRule"/>
</dbReference>
<dbReference type="CDD" id="cd24133">
    <property type="entry name" value="ASKHA_NBD_TsaD_bac"/>
    <property type="match status" value="1"/>
</dbReference>
<dbReference type="FunFam" id="3.30.420.40:FF:000040">
    <property type="entry name" value="tRNA N6-adenosine threonylcarbamoyltransferase"/>
    <property type="match status" value="1"/>
</dbReference>
<dbReference type="Gene3D" id="3.30.420.40">
    <property type="match status" value="2"/>
</dbReference>
<dbReference type="HAMAP" id="MF_01445">
    <property type="entry name" value="TsaD"/>
    <property type="match status" value="1"/>
</dbReference>
<dbReference type="InterPro" id="IPR043129">
    <property type="entry name" value="ATPase_NBD"/>
</dbReference>
<dbReference type="InterPro" id="IPR000905">
    <property type="entry name" value="Gcp-like_dom"/>
</dbReference>
<dbReference type="InterPro" id="IPR017861">
    <property type="entry name" value="KAE1/TsaD"/>
</dbReference>
<dbReference type="InterPro" id="IPR022450">
    <property type="entry name" value="TsaD"/>
</dbReference>
<dbReference type="NCBIfam" id="TIGR00329">
    <property type="entry name" value="gcp_kae1"/>
    <property type="match status" value="1"/>
</dbReference>
<dbReference type="NCBIfam" id="TIGR03723">
    <property type="entry name" value="T6A_TsaD_YgjD"/>
    <property type="match status" value="1"/>
</dbReference>
<dbReference type="PANTHER" id="PTHR11735">
    <property type="entry name" value="TRNA N6-ADENOSINE THREONYLCARBAMOYLTRANSFERASE"/>
    <property type="match status" value="1"/>
</dbReference>
<dbReference type="PANTHER" id="PTHR11735:SF6">
    <property type="entry name" value="TRNA N6-ADENOSINE THREONYLCARBAMOYLTRANSFERASE, MITOCHONDRIAL"/>
    <property type="match status" value="1"/>
</dbReference>
<dbReference type="Pfam" id="PF00814">
    <property type="entry name" value="TsaD"/>
    <property type="match status" value="1"/>
</dbReference>
<dbReference type="PRINTS" id="PR00789">
    <property type="entry name" value="OSIALOPTASE"/>
</dbReference>
<dbReference type="SUPFAM" id="SSF53067">
    <property type="entry name" value="Actin-like ATPase domain"/>
    <property type="match status" value="2"/>
</dbReference>
<reference key="1">
    <citation type="journal article" date="2002" name="Proc. Natl. Acad. Sci. U.S.A.">
        <title>The Brucella suis genome reveals fundamental similarities between animal and plant pathogens and symbionts.</title>
        <authorList>
            <person name="Paulsen I.T."/>
            <person name="Seshadri R."/>
            <person name="Nelson K.E."/>
            <person name="Eisen J.A."/>
            <person name="Heidelberg J.F."/>
            <person name="Read T.D."/>
            <person name="Dodson R.J."/>
            <person name="Umayam L.A."/>
            <person name="Brinkac L.M."/>
            <person name="Beanan M.J."/>
            <person name="Daugherty S.C."/>
            <person name="DeBoy R.T."/>
            <person name="Durkin A.S."/>
            <person name="Kolonay J.F."/>
            <person name="Madupu R."/>
            <person name="Nelson W.C."/>
            <person name="Ayodeji B."/>
            <person name="Kraul M."/>
            <person name="Shetty J."/>
            <person name="Malek J.A."/>
            <person name="Van Aken S.E."/>
            <person name="Riedmuller S."/>
            <person name="Tettelin H."/>
            <person name="Gill S.R."/>
            <person name="White O."/>
            <person name="Salzberg S.L."/>
            <person name="Hoover D.L."/>
            <person name="Lindler L.E."/>
            <person name="Halling S.M."/>
            <person name="Boyle S.M."/>
            <person name="Fraser C.M."/>
        </authorList>
    </citation>
    <scope>NUCLEOTIDE SEQUENCE [LARGE SCALE GENOMIC DNA]</scope>
    <source>
        <strain>1330</strain>
    </source>
</reference>
<reference key="2">
    <citation type="journal article" date="2011" name="J. Bacteriol.">
        <title>Revised genome sequence of Brucella suis 1330.</title>
        <authorList>
            <person name="Tae H."/>
            <person name="Shallom S."/>
            <person name="Settlage R."/>
            <person name="Preston D."/>
            <person name="Adams L.G."/>
            <person name="Garner H.R."/>
        </authorList>
    </citation>
    <scope>NUCLEOTIDE SEQUENCE [LARGE SCALE GENOMIC DNA]</scope>
    <source>
        <strain>1330</strain>
    </source>
</reference>
<evidence type="ECO:0000255" key="1">
    <source>
        <dbReference type="HAMAP-Rule" id="MF_01445"/>
    </source>
</evidence>
<evidence type="ECO:0000256" key="2">
    <source>
        <dbReference type="SAM" id="MobiDB-lite"/>
    </source>
</evidence>
<gene>
    <name evidence="1" type="primary">tsaD</name>
    <name type="synonym">gcp</name>
    <name type="ordered locus">BR1888</name>
    <name type="ordered locus">BS1330_I1882</name>
</gene>
<accession>Q8FYI5</accession>
<accession>G0K7V3</accession>